<sequence>MKLVKPKKFLGQHFLKDLKVAQDIADTVDTFPDLPILEVGPGMGVLTQFLVKKERLVKVVEVDYESVAYLREAYPSLEDNIIEDDFLKMNLQRLFDGHPFVLTGNYPYNISSQIFFKMLDNKDLIPCCTGMIQKEVAERIAAGPGSKTYGILSVLIQAWYRVEYLFTVNEQVFNPPPKVKSAVIRMTRNETQELGCDPKLFKQIVKTTFNQRRKTLRNSIKPILGKDCPLTEDALFNKRPEQLSVQEFIHLTNQVEQALKVPIEPVSQIENP</sequence>
<evidence type="ECO:0000255" key="1">
    <source>
        <dbReference type="HAMAP-Rule" id="MF_00607"/>
    </source>
</evidence>
<proteinExistence type="inferred from homology"/>
<accession>Q5LHC9</accession>
<keyword id="KW-0963">Cytoplasm</keyword>
<keyword id="KW-0489">Methyltransferase</keyword>
<keyword id="KW-0694">RNA-binding</keyword>
<keyword id="KW-0698">rRNA processing</keyword>
<keyword id="KW-0949">S-adenosyl-L-methionine</keyword>
<keyword id="KW-0808">Transferase</keyword>
<organism>
    <name type="scientific">Bacteroides fragilis (strain ATCC 25285 / DSM 2151 / CCUG 4856 / JCM 11019 / LMG 10263 / NCTC 9343 / Onslow / VPI 2553 / EN-2)</name>
    <dbReference type="NCBI Taxonomy" id="272559"/>
    <lineage>
        <taxon>Bacteria</taxon>
        <taxon>Pseudomonadati</taxon>
        <taxon>Bacteroidota</taxon>
        <taxon>Bacteroidia</taxon>
        <taxon>Bacteroidales</taxon>
        <taxon>Bacteroidaceae</taxon>
        <taxon>Bacteroides</taxon>
    </lineage>
</organism>
<dbReference type="EC" id="2.1.1.182" evidence="1"/>
<dbReference type="EMBL" id="CR626927">
    <property type="protein sequence ID" value="CAH06452.1"/>
    <property type="molecule type" value="Genomic_DNA"/>
</dbReference>
<dbReference type="RefSeq" id="WP_005784867.1">
    <property type="nucleotide sequence ID" value="NZ_UFTH01000001.1"/>
</dbReference>
<dbReference type="SMR" id="Q5LHC9"/>
<dbReference type="PaxDb" id="272559-BF9343_0672"/>
<dbReference type="GeneID" id="60370094"/>
<dbReference type="KEGG" id="bfs:BF9343_0672"/>
<dbReference type="eggNOG" id="COG0030">
    <property type="taxonomic scope" value="Bacteria"/>
</dbReference>
<dbReference type="HOGENOM" id="CLU_041220_0_1_10"/>
<dbReference type="Proteomes" id="UP000006731">
    <property type="component" value="Chromosome"/>
</dbReference>
<dbReference type="GO" id="GO:0005829">
    <property type="term" value="C:cytosol"/>
    <property type="evidence" value="ECO:0007669"/>
    <property type="project" value="TreeGrafter"/>
</dbReference>
<dbReference type="GO" id="GO:0052908">
    <property type="term" value="F:16S rRNA (adenine(1518)-N(6)/adenine(1519)-N(6))-dimethyltransferase activity"/>
    <property type="evidence" value="ECO:0007669"/>
    <property type="project" value="UniProtKB-EC"/>
</dbReference>
<dbReference type="GO" id="GO:0003723">
    <property type="term" value="F:RNA binding"/>
    <property type="evidence" value="ECO:0007669"/>
    <property type="project" value="UniProtKB-KW"/>
</dbReference>
<dbReference type="FunFam" id="1.10.8.100:FF:000001">
    <property type="entry name" value="Ribosomal RNA small subunit methyltransferase A"/>
    <property type="match status" value="1"/>
</dbReference>
<dbReference type="FunFam" id="3.40.50.150:FF:000157">
    <property type="entry name" value="Ribosomal RNA small subunit methyltransferase A"/>
    <property type="match status" value="1"/>
</dbReference>
<dbReference type="Gene3D" id="1.10.8.100">
    <property type="entry name" value="Ribosomal RNA adenine dimethylase-like, domain 2"/>
    <property type="match status" value="1"/>
</dbReference>
<dbReference type="Gene3D" id="3.40.50.150">
    <property type="entry name" value="Vaccinia Virus protein VP39"/>
    <property type="match status" value="1"/>
</dbReference>
<dbReference type="HAMAP" id="MF_00607">
    <property type="entry name" value="16SrRNA_methyltr_A"/>
    <property type="match status" value="1"/>
</dbReference>
<dbReference type="InterPro" id="IPR001737">
    <property type="entry name" value="KsgA/Erm"/>
</dbReference>
<dbReference type="InterPro" id="IPR023165">
    <property type="entry name" value="rRNA_Ade_diMease-like_C"/>
</dbReference>
<dbReference type="InterPro" id="IPR020596">
    <property type="entry name" value="rRNA_Ade_Mease_Trfase_CS"/>
</dbReference>
<dbReference type="InterPro" id="IPR020598">
    <property type="entry name" value="rRNA_Ade_methylase_Trfase_N"/>
</dbReference>
<dbReference type="InterPro" id="IPR011530">
    <property type="entry name" value="rRNA_adenine_dimethylase"/>
</dbReference>
<dbReference type="InterPro" id="IPR029063">
    <property type="entry name" value="SAM-dependent_MTases_sf"/>
</dbReference>
<dbReference type="NCBIfam" id="TIGR00755">
    <property type="entry name" value="ksgA"/>
    <property type="match status" value="1"/>
</dbReference>
<dbReference type="PANTHER" id="PTHR11727">
    <property type="entry name" value="DIMETHYLADENOSINE TRANSFERASE"/>
    <property type="match status" value="1"/>
</dbReference>
<dbReference type="PANTHER" id="PTHR11727:SF7">
    <property type="entry name" value="DIMETHYLADENOSINE TRANSFERASE-RELATED"/>
    <property type="match status" value="1"/>
</dbReference>
<dbReference type="Pfam" id="PF00398">
    <property type="entry name" value="RrnaAD"/>
    <property type="match status" value="1"/>
</dbReference>
<dbReference type="SMART" id="SM00650">
    <property type="entry name" value="rADc"/>
    <property type="match status" value="1"/>
</dbReference>
<dbReference type="SUPFAM" id="SSF53335">
    <property type="entry name" value="S-adenosyl-L-methionine-dependent methyltransferases"/>
    <property type="match status" value="1"/>
</dbReference>
<dbReference type="PROSITE" id="PS01131">
    <property type="entry name" value="RRNA_A_DIMETH"/>
    <property type="match status" value="1"/>
</dbReference>
<dbReference type="PROSITE" id="PS51689">
    <property type="entry name" value="SAM_RNA_A_N6_MT"/>
    <property type="match status" value="1"/>
</dbReference>
<protein>
    <recommendedName>
        <fullName evidence="1">Ribosomal RNA small subunit methyltransferase A</fullName>
        <ecNumber evidence="1">2.1.1.182</ecNumber>
    </recommendedName>
    <alternativeName>
        <fullName evidence="1">16S rRNA (adenine(1518)-N(6)/adenine(1519)-N(6))-dimethyltransferase</fullName>
    </alternativeName>
    <alternativeName>
        <fullName evidence="1">16S rRNA dimethyladenosine transferase</fullName>
    </alternativeName>
    <alternativeName>
        <fullName evidence="1">16S rRNA dimethylase</fullName>
    </alternativeName>
    <alternativeName>
        <fullName evidence="1">S-adenosylmethionine-6-N', N'-adenosyl(rRNA) dimethyltransferase</fullName>
    </alternativeName>
</protein>
<name>RSMA_BACFN</name>
<gene>
    <name evidence="1" type="primary">rsmA</name>
    <name evidence="1" type="synonym">ksgA</name>
    <name type="ordered locus">BF0706</name>
</gene>
<reference key="1">
    <citation type="journal article" date="2005" name="Science">
        <title>Extensive DNA inversions in the B. fragilis genome control variable gene expression.</title>
        <authorList>
            <person name="Cerdeno-Tarraga A.-M."/>
            <person name="Patrick S."/>
            <person name="Crossman L.C."/>
            <person name="Blakely G."/>
            <person name="Abratt V."/>
            <person name="Lennard N."/>
            <person name="Poxton I."/>
            <person name="Duerden B."/>
            <person name="Harris B."/>
            <person name="Quail M.A."/>
            <person name="Barron A."/>
            <person name="Clark L."/>
            <person name="Corton C."/>
            <person name="Doggett J."/>
            <person name="Holden M.T.G."/>
            <person name="Larke N."/>
            <person name="Line A."/>
            <person name="Lord A."/>
            <person name="Norbertczak H."/>
            <person name="Ormond D."/>
            <person name="Price C."/>
            <person name="Rabbinowitsch E."/>
            <person name="Woodward J."/>
            <person name="Barrell B.G."/>
            <person name="Parkhill J."/>
        </authorList>
    </citation>
    <scope>NUCLEOTIDE SEQUENCE [LARGE SCALE GENOMIC DNA]</scope>
    <source>
        <strain>ATCC 25285 / DSM 2151 / CCUG 4856 / JCM 11019 / LMG 10263 / NCTC 9343 / Onslow / VPI 2553 / EN-2</strain>
    </source>
</reference>
<comment type="function">
    <text evidence="1">Specifically dimethylates two adjacent adenosines (A1518 and A1519) in the loop of a conserved hairpin near the 3'-end of 16S rRNA in the 30S particle. May play a critical role in biogenesis of 30S subunits.</text>
</comment>
<comment type="catalytic activity">
    <reaction evidence="1">
        <text>adenosine(1518)/adenosine(1519) in 16S rRNA + 4 S-adenosyl-L-methionine = N(6)-dimethyladenosine(1518)/N(6)-dimethyladenosine(1519) in 16S rRNA + 4 S-adenosyl-L-homocysteine + 4 H(+)</text>
        <dbReference type="Rhea" id="RHEA:19609"/>
        <dbReference type="Rhea" id="RHEA-COMP:10232"/>
        <dbReference type="Rhea" id="RHEA-COMP:10233"/>
        <dbReference type="ChEBI" id="CHEBI:15378"/>
        <dbReference type="ChEBI" id="CHEBI:57856"/>
        <dbReference type="ChEBI" id="CHEBI:59789"/>
        <dbReference type="ChEBI" id="CHEBI:74411"/>
        <dbReference type="ChEBI" id="CHEBI:74493"/>
        <dbReference type="EC" id="2.1.1.182"/>
    </reaction>
</comment>
<comment type="subcellular location">
    <subcellularLocation>
        <location evidence="1">Cytoplasm</location>
    </subcellularLocation>
</comment>
<comment type="similarity">
    <text evidence="1">Belongs to the class I-like SAM-binding methyltransferase superfamily. rRNA adenine N(6)-methyltransferase family. RsmA subfamily.</text>
</comment>
<feature type="chain" id="PRO_0000271901" description="Ribosomal RNA small subunit methyltransferase A">
    <location>
        <begin position="1"/>
        <end position="272"/>
    </location>
</feature>
<feature type="binding site" evidence="1">
    <location>
        <position position="13"/>
    </location>
    <ligand>
        <name>S-adenosyl-L-methionine</name>
        <dbReference type="ChEBI" id="CHEBI:59789"/>
    </ligand>
</feature>
<feature type="binding site" evidence="1">
    <location>
        <position position="15"/>
    </location>
    <ligand>
        <name>S-adenosyl-L-methionine</name>
        <dbReference type="ChEBI" id="CHEBI:59789"/>
    </ligand>
</feature>
<feature type="binding site" evidence="1">
    <location>
        <position position="40"/>
    </location>
    <ligand>
        <name>S-adenosyl-L-methionine</name>
        <dbReference type="ChEBI" id="CHEBI:59789"/>
    </ligand>
</feature>
<feature type="binding site" evidence="1">
    <location>
        <position position="61"/>
    </location>
    <ligand>
        <name>S-adenosyl-L-methionine</name>
        <dbReference type="ChEBI" id="CHEBI:59789"/>
    </ligand>
</feature>
<feature type="binding site" evidence="1">
    <location>
        <position position="85"/>
    </location>
    <ligand>
        <name>S-adenosyl-L-methionine</name>
        <dbReference type="ChEBI" id="CHEBI:59789"/>
    </ligand>
</feature>
<feature type="binding site" evidence="1">
    <location>
        <position position="105"/>
    </location>
    <ligand>
        <name>S-adenosyl-L-methionine</name>
        <dbReference type="ChEBI" id="CHEBI:59789"/>
    </ligand>
</feature>